<dbReference type="EC" id="2.7.11.1" evidence="9"/>
<dbReference type="EMBL" id="EU709762">
    <property type="protein sequence ID" value="ACD85805.1"/>
    <property type="molecule type" value="mRNA"/>
</dbReference>
<dbReference type="EMBL" id="AP003948">
    <property type="protein sequence ID" value="BAD03092.1"/>
    <property type="molecule type" value="Genomic_DNA"/>
</dbReference>
<dbReference type="EMBL" id="AP008214">
    <property type="protein sequence ID" value="BAF24297.1"/>
    <property type="molecule type" value="Genomic_DNA"/>
</dbReference>
<dbReference type="EMBL" id="AP014964">
    <property type="protein sequence ID" value="BAT06485.1"/>
    <property type="molecule type" value="Genomic_DNA"/>
</dbReference>
<dbReference type="RefSeq" id="XP_015650119.1">
    <property type="nucleotide sequence ID" value="XM_015794633.1"/>
</dbReference>
<dbReference type="SMR" id="Q6ZIU9"/>
<dbReference type="FunCoup" id="Q6ZIU9">
    <property type="interactions" value="397"/>
</dbReference>
<dbReference type="STRING" id="39947.Q6ZIU9"/>
<dbReference type="PaxDb" id="39947-Q6ZIU9"/>
<dbReference type="EnsemblPlants" id="Os08t0540400-01">
    <property type="protein sequence ID" value="Os08t0540400-01"/>
    <property type="gene ID" value="Os08g0540400"/>
</dbReference>
<dbReference type="Gramene" id="Os08t0540400-01">
    <property type="protein sequence ID" value="Os08t0540400-01"/>
    <property type="gene ID" value="Os08g0540400"/>
</dbReference>
<dbReference type="KEGG" id="dosa:Os08g0540400"/>
<dbReference type="eggNOG" id="KOG0032">
    <property type="taxonomic scope" value="Eukaryota"/>
</dbReference>
<dbReference type="HOGENOM" id="CLU_000288_37_4_1"/>
<dbReference type="InParanoid" id="Q6ZIU9"/>
<dbReference type="OMA" id="QMFHHMD"/>
<dbReference type="OrthoDB" id="40902at2759"/>
<dbReference type="Proteomes" id="UP000000763">
    <property type="component" value="Chromosome 8"/>
</dbReference>
<dbReference type="Proteomes" id="UP000059680">
    <property type="component" value="Chromosome 8"/>
</dbReference>
<dbReference type="GO" id="GO:0005737">
    <property type="term" value="C:cytoplasm"/>
    <property type="evidence" value="ECO:0000318"/>
    <property type="project" value="GO_Central"/>
</dbReference>
<dbReference type="GO" id="GO:0005634">
    <property type="term" value="C:nucleus"/>
    <property type="evidence" value="ECO:0000318"/>
    <property type="project" value="GO_Central"/>
</dbReference>
<dbReference type="GO" id="GO:0005886">
    <property type="term" value="C:plasma membrane"/>
    <property type="evidence" value="ECO:0000318"/>
    <property type="project" value="GO_Central"/>
</dbReference>
<dbReference type="GO" id="GO:0005524">
    <property type="term" value="F:ATP binding"/>
    <property type="evidence" value="ECO:0007669"/>
    <property type="project" value="UniProtKB-KW"/>
</dbReference>
<dbReference type="GO" id="GO:0005509">
    <property type="term" value="F:calcium ion binding"/>
    <property type="evidence" value="ECO:0007669"/>
    <property type="project" value="InterPro"/>
</dbReference>
<dbReference type="GO" id="GO:0009931">
    <property type="term" value="F:calcium-dependent protein serine/threonine kinase activity"/>
    <property type="evidence" value="ECO:0000318"/>
    <property type="project" value="GO_Central"/>
</dbReference>
<dbReference type="GO" id="GO:0004683">
    <property type="term" value="F:calcium/calmodulin-dependent protein kinase activity"/>
    <property type="evidence" value="ECO:0000318"/>
    <property type="project" value="GO_Central"/>
</dbReference>
<dbReference type="GO" id="GO:0005516">
    <property type="term" value="F:calmodulin binding"/>
    <property type="evidence" value="ECO:0000318"/>
    <property type="project" value="GO_Central"/>
</dbReference>
<dbReference type="GO" id="GO:0106310">
    <property type="term" value="F:protein serine kinase activity"/>
    <property type="evidence" value="ECO:0007669"/>
    <property type="project" value="RHEA"/>
</dbReference>
<dbReference type="GO" id="GO:0035556">
    <property type="term" value="P:intracellular signal transduction"/>
    <property type="evidence" value="ECO:0000318"/>
    <property type="project" value="GO_Central"/>
</dbReference>
<dbReference type="GO" id="GO:1901001">
    <property type="term" value="P:negative regulation of response to salt stress"/>
    <property type="evidence" value="ECO:0000315"/>
    <property type="project" value="UniProtKB"/>
</dbReference>
<dbReference type="GO" id="GO:0009737">
    <property type="term" value="P:response to abscisic acid"/>
    <property type="evidence" value="ECO:0000315"/>
    <property type="project" value="UniProtKB"/>
</dbReference>
<dbReference type="CDD" id="cd00051">
    <property type="entry name" value="EFh"/>
    <property type="match status" value="2"/>
</dbReference>
<dbReference type="CDD" id="cd05117">
    <property type="entry name" value="STKc_CAMK"/>
    <property type="match status" value="1"/>
</dbReference>
<dbReference type="FunFam" id="1.10.510.10:FF:000067">
    <property type="entry name" value="calcium-dependent protein kinase 13"/>
    <property type="match status" value="1"/>
</dbReference>
<dbReference type="FunFam" id="3.30.200.20:FF:000462">
    <property type="entry name" value="Calcium-dependent protein kinase 24"/>
    <property type="match status" value="1"/>
</dbReference>
<dbReference type="FunFam" id="1.10.238.10:FF:000050">
    <property type="entry name" value="Calcium-dependent protein kinase 7"/>
    <property type="match status" value="1"/>
</dbReference>
<dbReference type="Gene3D" id="1.10.238.10">
    <property type="entry name" value="EF-hand"/>
    <property type="match status" value="1"/>
</dbReference>
<dbReference type="Gene3D" id="3.30.200.20">
    <property type="entry name" value="Phosphorylase Kinase, domain 1"/>
    <property type="match status" value="1"/>
</dbReference>
<dbReference type="Gene3D" id="1.10.510.10">
    <property type="entry name" value="Transferase(Phosphotransferase) domain 1"/>
    <property type="match status" value="1"/>
</dbReference>
<dbReference type="InterPro" id="IPR050205">
    <property type="entry name" value="CDPK_Ser/Thr_kinases"/>
</dbReference>
<dbReference type="InterPro" id="IPR011992">
    <property type="entry name" value="EF-hand-dom_pair"/>
</dbReference>
<dbReference type="InterPro" id="IPR018247">
    <property type="entry name" value="EF_Hand_1_Ca_BS"/>
</dbReference>
<dbReference type="InterPro" id="IPR002048">
    <property type="entry name" value="EF_hand_dom"/>
</dbReference>
<dbReference type="InterPro" id="IPR011009">
    <property type="entry name" value="Kinase-like_dom_sf"/>
</dbReference>
<dbReference type="InterPro" id="IPR000719">
    <property type="entry name" value="Prot_kinase_dom"/>
</dbReference>
<dbReference type="InterPro" id="IPR017441">
    <property type="entry name" value="Protein_kinase_ATP_BS"/>
</dbReference>
<dbReference type="InterPro" id="IPR008271">
    <property type="entry name" value="Ser/Thr_kinase_AS"/>
</dbReference>
<dbReference type="PANTHER" id="PTHR24349">
    <property type="entry name" value="SERINE/THREONINE-PROTEIN KINASE"/>
    <property type="match status" value="1"/>
</dbReference>
<dbReference type="Pfam" id="PF13499">
    <property type="entry name" value="EF-hand_7"/>
    <property type="match status" value="2"/>
</dbReference>
<dbReference type="Pfam" id="PF00069">
    <property type="entry name" value="Pkinase"/>
    <property type="match status" value="1"/>
</dbReference>
<dbReference type="SMART" id="SM00054">
    <property type="entry name" value="EFh"/>
    <property type="match status" value="4"/>
</dbReference>
<dbReference type="SMART" id="SM00220">
    <property type="entry name" value="S_TKc"/>
    <property type="match status" value="1"/>
</dbReference>
<dbReference type="SUPFAM" id="SSF47473">
    <property type="entry name" value="EF-hand"/>
    <property type="match status" value="1"/>
</dbReference>
<dbReference type="SUPFAM" id="SSF56112">
    <property type="entry name" value="Protein kinase-like (PK-like)"/>
    <property type="match status" value="1"/>
</dbReference>
<dbReference type="PROSITE" id="PS00018">
    <property type="entry name" value="EF_HAND_1"/>
    <property type="match status" value="4"/>
</dbReference>
<dbReference type="PROSITE" id="PS50222">
    <property type="entry name" value="EF_HAND_2"/>
    <property type="match status" value="4"/>
</dbReference>
<dbReference type="PROSITE" id="PS00107">
    <property type="entry name" value="PROTEIN_KINASE_ATP"/>
    <property type="match status" value="1"/>
</dbReference>
<dbReference type="PROSITE" id="PS50011">
    <property type="entry name" value="PROTEIN_KINASE_DOM"/>
    <property type="match status" value="1"/>
</dbReference>
<dbReference type="PROSITE" id="PS00108">
    <property type="entry name" value="PROTEIN_KINASE_ST"/>
    <property type="match status" value="1"/>
</dbReference>
<accession>Q6ZIU9</accession>
<accession>B3GN93</accession>
<keyword id="KW-0067">ATP-binding</keyword>
<keyword id="KW-0106">Calcium</keyword>
<keyword id="KW-0418">Kinase</keyword>
<keyword id="KW-0449">Lipoprotein</keyword>
<keyword id="KW-0472">Membrane</keyword>
<keyword id="KW-0479">Metal-binding</keyword>
<keyword id="KW-0519">Myristate</keyword>
<keyword id="KW-0547">Nucleotide-binding</keyword>
<keyword id="KW-1185">Reference proteome</keyword>
<keyword id="KW-0677">Repeat</keyword>
<keyword id="KW-0723">Serine/threonine-protein kinase</keyword>
<keyword id="KW-0346">Stress response</keyword>
<keyword id="KW-0808">Transferase</keyword>
<reference key="1">
    <citation type="submission" date="2008-05" db="EMBL/GenBank/DDBJ databases">
        <title>Cloning and physiological characteristics of OsCPK21 associated with flower development.</title>
        <authorList>
            <person name="Zhou X.J."/>
            <person name="Wei X."/>
            <person name="Li J."/>
            <person name="Liu H."/>
            <person name="Liu Y."/>
            <person name="Wang Y.D."/>
        </authorList>
    </citation>
    <scope>NUCLEOTIDE SEQUENCE [MRNA]</scope>
    <source>
        <tissue>Flower</tissue>
    </source>
</reference>
<reference key="2">
    <citation type="journal article" date="2005" name="Nature">
        <title>The map-based sequence of the rice genome.</title>
        <authorList>
            <consortium name="International rice genome sequencing project (IRGSP)"/>
        </authorList>
    </citation>
    <scope>NUCLEOTIDE SEQUENCE [LARGE SCALE GENOMIC DNA]</scope>
    <source>
        <strain>cv. Nipponbare</strain>
    </source>
</reference>
<reference key="3">
    <citation type="journal article" date="2008" name="Nucleic Acids Res.">
        <title>The rice annotation project database (RAP-DB): 2008 update.</title>
        <authorList>
            <consortium name="The rice annotation project (RAP)"/>
        </authorList>
    </citation>
    <scope>GENOME REANNOTATION</scope>
    <source>
        <strain>cv. Nipponbare</strain>
    </source>
</reference>
<reference key="4">
    <citation type="journal article" date="2013" name="Rice">
        <title>Improvement of the Oryza sativa Nipponbare reference genome using next generation sequence and optical map data.</title>
        <authorList>
            <person name="Kawahara Y."/>
            <person name="de la Bastide M."/>
            <person name="Hamilton J.P."/>
            <person name="Kanamori H."/>
            <person name="McCombie W.R."/>
            <person name="Ouyang S."/>
            <person name="Schwartz D.C."/>
            <person name="Tanaka T."/>
            <person name="Wu J."/>
            <person name="Zhou S."/>
            <person name="Childs K.L."/>
            <person name="Davidson R.M."/>
            <person name="Lin H."/>
            <person name="Quesada-Ocampo L."/>
            <person name="Vaillancourt B."/>
            <person name="Sakai H."/>
            <person name="Lee S.S."/>
            <person name="Kim J."/>
            <person name="Numa H."/>
            <person name="Itoh T."/>
            <person name="Buell C.R."/>
            <person name="Matsumoto T."/>
        </authorList>
    </citation>
    <scope>GENOME REANNOTATION</scope>
    <source>
        <strain>cv. Nipponbare</strain>
    </source>
</reference>
<reference key="5">
    <citation type="journal article" date="2005" name="Plant Cell Physiol.">
        <title>Genome-wide identification of the rice calcium-dependent protein kinase and its closely related kinase gene families: comprehensive analysis of the CDPKs gene family in rice.</title>
        <authorList>
            <person name="Asano T."/>
            <person name="Tanaka N."/>
            <person name="Yang G."/>
            <person name="Hayashi N."/>
            <person name="Komatsu S."/>
        </authorList>
    </citation>
    <scope>GENE FAMILY</scope>
    <scope>NOMENCLATURE</scope>
    <scope>TISSUE SPECIFICITY</scope>
</reference>
<reference key="6">
    <citation type="journal article" date="2011" name="Plant Mol. Biol.">
        <title>Functional characterisation of OsCPK21, a calcium-dependent protein kinase that confers salt tolerance in rice.</title>
        <authorList>
            <person name="Asano T."/>
            <person name="Hakata M."/>
            <person name="Nakamura H."/>
            <person name="Aoki N."/>
            <person name="Komatsu S."/>
            <person name="Ichikawa H."/>
            <person name="Hirochika H."/>
            <person name="Ohsugi R."/>
        </authorList>
    </citation>
    <scope>FUNCTION</scope>
    <scope>TISSUE SPECIFICITY</scope>
    <scope>INDUCTION</scope>
</reference>
<sequence>MGGCYSAYASSRKLRGRISKISLVIPDPVPDAEAASPRKDGVDGDGDDVRGGGGGCDDGGDVVAIATTTADEFARRYVLGKELGRGEFGVTRRCSDAATGEALACKTIRKHRRLAPPRVTAAKAAAAHGEDVKREVAIMRRMSSASSSRGGGAASSAAVVRLREACEDAADGSVHLVMELCEGGELFDRIVARGHYSERAAANIFRTIVDVVQLCHSNGVIHRDLKPENFLFANKSEDSPLKVIDFGLSVFFKPGDRFTEVVGSAYYMAPEVLRRSYGPEVDVWSAGVILYILLCGVPPFWGDNDEKIAQAILRGAIDFNREPLPRVSANAKDLVRRMLDPNPSTRLTAKQVLEHPWLKNADTAPNVSLGDAVRARLQQFSAMNKFKKKALGVVARNLPGEEVDKYVQMFHHMDKDKNGHLSLDELLEGLHINGQPVPEPEIRMLLEAADTDGNGTLDCDEFVTVSVHLKKMSNDEYLAAAFNYFDKDGSGFIELDELREEVGPNEQAILEILRDVDTDKDGRISYQEFELMMKSGADWRNASRHFSRANFSTLSRRLCKDTLTP</sequence>
<gene>
    <name evidence="8" type="primary">CPK21</name>
    <name evidence="11" type="ordered locus">Os08g0540400</name>
    <name evidence="9" type="ordered locus">LOC_Os08g42750</name>
    <name evidence="10" type="ORF">OJ1211_G06.4</name>
</gene>
<organism>
    <name type="scientific">Oryza sativa subsp. japonica</name>
    <name type="common">Rice</name>
    <dbReference type="NCBI Taxonomy" id="39947"/>
    <lineage>
        <taxon>Eukaryota</taxon>
        <taxon>Viridiplantae</taxon>
        <taxon>Streptophyta</taxon>
        <taxon>Embryophyta</taxon>
        <taxon>Tracheophyta</taxon>
        <taxon>Spermatophyta</taxon>
        <taxon>Magnoliopsida</taxon>
        <taxon>Liliopsida</taxon>
        <taxon>Poales</taxon>
        <taxon>Poaceae</taxon>
        <taxon>BOP clade</taxon>
        <taxon>Oryzoideae</taxon>
        <taxon>Oryzeae</taxon>
        <taxon>Oryzinae</taxon>
        <taxon>Oryza</taxon>
        <taxon>Oryza sativa</taxon>
    </lineage>
</organism>
<comment type="function">
    <text evidence="1 7">May play a role in signal transduction pathways that involve calcium as a second messenger (By similarity). Functions in signal transduction pathways that positively regulate responses to abscisic acid (ABA) and salt stress (PubMed:21136139).</text>
</comment>
<comment type="catalytic activity">
    <reaction evidence="9">
        <text>L-seryl-[protein] + ATP = O-phospho-L-seryl-[protein] + ADP + H(+)</text>
        <dbReference type="Rhea" id="RHEA:17989"/>
        <dbReference type="Rhea" id="RHEA-COMP:9863"/>
        <dbReference type="Rhea" id="RHEA-COMP:11604"/>
        <dbReference type="ChEBI" id="CHEBI:15378"/>
        <dbReference type="ChEBI" id="CHEBI:29999"/>
        <dbReference type="ChEBI" id="CHEBI:30616"/>
        <dbReference type="ChEBI" id="CHEBI:83421"/>
        <dbReference type="ChEBI" id="CHEBI:456216"/>
        <dbReference type="EC" id="2.7.11.1"/>
    </reaction>
</comment>
<comment type="catalytic activity">
    <reaction evidence="9">
        <text>L-threonyl-[protein] + ATP = O-phospho-L-threonyl-[protein] + ADP + H(+)</text>
        <dbReference type="Rhea" id="RHEA:46608"/>
        <dbReference type="Rhea" id="RHEA-COMP:11060"/>
        <dbReference type="Rhea" id="RHEA-COMP:11605"/>
        <dbReference type="ChEBI" id="CHEBI:15378"/>
        <dbReference type="ChEBI" id="CHEBI:30013"/>
        <dbReference type="ChEBI" id="CHEBI:30616"/>
        <dbReference type="ChEBI" id="CHEBI:61977"/>
        <dbReference type="ChEBI" id="CHEBI:456216"/>
        <dbReference type="EC" id="2.7.11.1"/>
    </reaction>
</comment>
<comment type="activity regulation">
    <text evidence="1">Activated by calcium. Autophosphorylation may play an important role in the regulation of the kinase activity.</text>
</comment>
<comment type="subcellular location">
    <subcellularLocation>
        <location evidence="9">Membrane</location>
        <topology evidence="9">Lipid-anchor</topology>
    </subcellularLocation>
</comment>
<comment type="tissue specificity">
    <text evidence="6 7">Expressed in spikelets and developing seeds.</text>
</comment>
<comment type="induction">
    <text evidence="7">By abscisic acid (ABA) and salt stress.</text>
</comment>
<comment type="domain">
    <text evidence="1">There are 3 contiguous domains conserved in the CDPK subfamily: a kinase domain, an autoinhibitory (junction) domain and a calmodulin-like domain. The autoinhibitory domain (364-394) inactivates kinase activity under calcium-free conditions.</text>
</comment>
<comment type="miscellaneous">
    <text evidence="7">Plants over-expressing CPK21 display enhanced tolerance to salt stress.</text>
</comment>
<comment type="similarity">
    <text evidence="9">Belongs to the protein kinase superfamily. Ser/Thr protein kinase family. CDPK subfamily.</text>
</comment>
<name>CDPKL_ORYSJ</name>
<evidence type="ECO:0000250" key="1">
    <source>
        <dbReference type="UniProtKB" id="Q06850"/>
    </source>
</evidence>
<evidence type="ECO:0000255" key="2"/>
<evidence type="ECO:0000255" key="3">
    <source>
        <dbReference type="PROSITE-ProRule" id="PRU00159"/>
    </source>
</evidence>
<evidence type="ECO:0000255" key="4">
    <source>
        <dbReference type="PROSITE-ProRule" id="PRU00448"/>
    </source>
</evidence>
<evidence type="ECO:0000256" key="5">
    <source>
        <dbReference type="SAM" id="MobiDB-lite"/>
    </source>
</evidence>
<evidence type="ECO:0000269" key="6">
    <source>
    </source>
</evidence>
<evidence type="ECO:0000269" key="7">
    <source>
    </source>
</evidence>
<evidence type="ECO:0000303" key="8">
    <source>
    </source>
</evidence>
<evidence type="ECO:0000305" key="9"/>
<evidence type="ECO:0000312" key="10">
    <source>
        <dbReference type="EMBL" id="BAD03092.1"/>
    </source>
</evidence>
<evidence type="ECO:0000312" key="11">
    <source>
        <dbReference type="EMBL" id="BAF24297.1"/>
    </source>
</evidence>
<feature type="initiator methionine" description="Removed" evidence="2">
    <location>
        <position position="1"/>
    </location>
</feature>
<feature type="chain" id="PRO_0000437564" description="Calcium-dependent protein kinase 21">
    <location>
        <begin position="2"/>
        <end position="565"/>
    </location>
</feature>
<feature type="domain" description="Protein kinase" evidence="3">
    <location>
        <begin position="77"/>
        <end position="358"/>
    </location>
</feature>
<feature type="domain" description="EF-hand 1" evidence="4">
    <location>
        <begin position="401"/>
        <end position="436"/>
    </location>
</feature>
<feature type="domain" description="EF-hand 2" evidence="4">
    <location>
        <begin position="437"/>
        <end position="472"/>
    </location>
</feature>
<feature type="domain" description="EF-hand 3" evidence="4">
    <location>
        <begin position="473"/>
        <end position="500"/>
    </location>
</feature>
<feature type="domain" description="EF-hand 4" evidence="4">
    <location>
        <begin position="504"/>
        <end position="539"/>
    </location>
</feature>
<feature type="region of interest" description="Disordered" evidence="5">
    <location>
        <begin position="28"/>
        <end position="55"/>
    </location>
</feature>
<feature type="region of interest" description="Autoinhibitory domain" evidence="1">
    <location>
        <begin position="364"/>
        <end position="394"/>
    </location>
</feature>
<feature type="compositionally biased region" description="Basic and acidic residues" evidence="5">
    <location>
        <begin position="36"/>
        <end position="50"/>
    </location>
</feature>
<feature type="active site" description="Proton acceptor" evidence="3">
    <location>
        <position position="224"/>
    </location>
</feature>
<feature type="binding site" evidence="3">
    <location>
        <begin position="83"/>
        <end position="91"/>
    </location>
    <ligand>
        <name>ATP</name>
        <dbReference type="ChEBI" id="CHEBI:30616"/>
    </ligand>
</feature>
<feature type="binding site" evidence="3">
    <location>
        <position position="106"/>
    </location>
    <ligand>
        <name>ATP</name>
        <dbReference type="ChEBI" id="CHEBI:30616"/>
    </ligand>
</feature>
<feature type="binding site" evidence="4">
    <location>
        <position position="414"/>
    </location>
    <ligand>
        <name>Ca(2+)</name>
        <dbReference type="ChEBI" id="CHEBI:29108"/>
        <label>1</label>
    </ligand>
</feature>
<feature type="binding site" evidence="4">
    <location>
        <position position="416"/>
    </location>
    <ligand>
        <name>Ca(2+)</name>
        <dbReference type="ChEBI" id="CHEBI:29108"/>
        <label>1</label>
    </ligand>
</feature>
<feature type="binding site" evidence="4">
    <location>
        <position position="418"/>
    </location>
    <ligand>
        <name>Ca(2+)</name>
        <dbReference type="ChEBI" id="CHEBI:29108"/>
        <label>1</label>
    </ligand>
</feature>
<feature type="binding site" evidence="4">
    <location>
        <position position="420"/>
    </location>
    <ligand>
        <name>Ca(2+)</name>
        <dbReference type="ChEBI" id="CHEBI:29108"/>
        <label>1</label>
    </ligand>
</feature>
<feature type="binding site" evidence="4">
    <location>
        <position position="425"/>
    </location>
    <ligand>
        <name>Ca(2+)</name>
        <dbReference type="ChEBI" id="CHEBI:29108"/>
        <label>1</label>
    </ligand>
</feature>
<feature type="binding site" evidence="4">
    <location>
        <position position="450"/>
    </location>
    <ligand>
        <name>Ca(2+)</name>
        <dbReference type="ChEBI" id="CHEBI:29108"/>
        <label>2</label>
    </ligand>
</feature>
<feature type="binding site" evidence="4">
    <location>
        <position position="452"/>
    </location>
    <ligand>
        <name>Ca(2+)</name>
        <dbReference type="ChEBI" id="CHEBI:29108"/>
        <label>2</label>
    </ligand>
</feature>
<feature type="binding site" evidence="4">
    <location>
        <position position="454"/>
    </location>
    <ligand>
        <name>Ca(2+)</name>
        <dbReference type="ChEBI" id="CHEBI:29108"/>
        <label>2</label>
    </ligand>
</feature>
<feature type="binding site" evidence="4">
    <location>
        <position position="456"/>
    </location>
    <ligand>
        <name>Ca(2+)</name>
        <dbReference type="ChEBI" id="CHEBI:29108"/>
        <label>2</label>
    </ligand>
</feature>
<feature type="binding site" evidence="4">
    <location>
        <position position="461"/>
    </location>
    <ligand>
        <name>Ca(2+)</name>
        <dbReference type="ChEBI" id="CHEBI:29108"/>
        <label>2</label>
    </ligand>
</feature>
<feature type="binding site" evidence="4">
    <location>
        <position position="486"/>
    </location>
    <ligand>
        <name>Ca(2+)</name>
        <dbReference type="ChEBI" id="CHEBI:29108"/>
        <label>3</label>
    </ligand>
</feature>
<feature type="binding site" evidence="4">
    <location>
        <position position="488"/>
    </location>
    <ligand>
        <name>Ca(2+)</name>
        <dbReference type="ChEBI" id="CHEBI:29108"/>
        <label>3</label>
    </ligand>
</feature>
<feature type="binding site" evidence="4">
    <location>
        <position position="490"/>
    </location>
    <ligand>
        <name>Ca(2+)</name>
        <dbReference type="ChEBI" id="CHEBI:29108"/>
        <label>3</label>
    </ligand>
</feature>
<feature type="binding site" evidence="4">
    <location>
        <position position="497"/>
    </location>
    <ligand>
        <name>Ca(2+)</name>
        <dbReference type="ChEBI" id="CHEBI:29108"/>
        <label>3</label>
    </ligand>
</feature>
<feature type="binding site" evidence="4">
    <location>
        <position position="517"/>
    </location>
    <ligand>
        <name>Ca(2+)</name>
        <dbReference type="ChEBI" id="CHEBI:29108"/>
        <label>4</label>
    </ligand>
</feature>
<feature type="binding site" evidence="4">
    <location>
        <position position="519"/>
    </location>
    <ligand>
        <name>Ca(2+)</name>
        <dbReference type="ChEBI" id="CHEBI:29108"/>
        <label>4</label>
    </ligand>
</feature>
<feature type="binding site" evidence="4">
    <location>
        <position position="521"/>
    </location>
    <ligand>
        <name>Ca(2+)</name>
        <dbReference type="ChEBI" id="CHEBI:29108"/>
        <label>4</label>
    </ligand>
</feature>
<feature type="binding site" evidence="4">
    <location>
        <position position="523"/>
    </location>
    <ligand>
        <name>Ca(2+)</name>
        <dbReference type="ChEBI" id="CHEBI:29108"/>
        <label>4</label>
    </ligand>
</feature>
<feature type="binding site" evidence="4">
    <location>
        <position position="528"/>
    </location>
    <ligand>
        <name>Ca(2+)</name>
        <dbReference type="ChEBI" id="CHEBI:29108"/>
        <label>4</label>
    </ligand>
</feature>
<feature type="lipid moiety-binding region" description="N-myristoyl glycine" evidence="2">
    <location>
        <position position="2"/>
    </location>
</feature>
<feature type="sequence conflict" description="In Ref. 1; ACD85805." evidence="9" ref="1">
    <original>S</original>
    <variation>A</variation>
    <location>
        <position position="22"/>
    </location>
</feature>
<feature type="sequence conflict" description="In Ref. 1; ACD85805." evidence="9" ref="1">
    <original>G</original>
    <variation>V</variation>
    <location>
        <position position="400"/>
    </location>
</feature>
<feature type="sequence conflict" description="In Ref. 1; ACD85805." evidence="9" ref="1">
    <original>L</original>
    <variation>H</variation>
    <location>
        <position position="563"/>
    </location>
</feature>
<proteinExistence type="evidence at transcript level"/>
<protein>
    <recommendedName>
        <fullName evidence="9">Calcium-dependent protein kinase 21</fullName>
        <shortName evidence="9">OsCDPK21</shortName>
        <shortName evidence="8">OsCPK21</shortName>
        <ecNumber evidence="9">2.7.11.1</ecNumber>
    </recommendedName>
</protein>